<evidence type="ECO:0000255" key="1">
    <source>
        <dbReference type="HAMAP-Rule" id="MF_01358"/>
    </source>
</evidence>
<protein>
    <recommendedName>
        <fullName evidence="1">NADH-quinone oxidoreductase subunit D</fullName>
        <ecNumber evidence="1">7.1.1.-</ecNumber>
    </recommendedName>
    <alternativeName>
        <fullName evidence="1">NADH dehydrogenase I subunit D</fullName>
    </alternativeName>
    <alternativeName>
        <fullName evidence="1">NDH-1 subunit D</fullName>
    </alternativeName>
</protein>
<sequence length="441" mass="48358">MSTTTESTHDGAGETLVVAGGQDWDKVVEAARSADPGERIVVNMGPQHPSTHGVLRLILEIEGETVTEARCGIGYLHTGIEKNLEYRYWTQGVTFVTRMDYLSPFFNETAYCLGVEKLLGITDQIPERVNVIRVMMMELNRISSHLVALATGGMELGAMTPMFVGFRGREIVLTLFESITGLRMNSAYIRPGGVAQDLPPNAKTEIAQALDQLRQPLREMGDLLNENAIWKARTQDIGYLDLTGCMALGITGPILRATGLPHDLRKSEPYCGYENYEFDVITADTCDAYGRYMIRVKEMWESIKIVEQCLDKLQPGPIMVENGKIAWPADLKVGPDGLGNSPEHIAKIMGGSMEALIHHFKLVTEGIRVPPGQVYTAVESPRGELGVHMVSDGGTRPYRVHYRDPSFTNLQSVAAMCEGGMVADLITAVASIDPVMGGVDR</sequence>
<comment type="function">
    <text evidence="1">NDH-1 shuttles electrons from NADH, via FMN and iron-sulfur (Fe-S) centers, to quinones in the respiratory chain. The immediate electron acceptor for the enzyme in this species is believed to be a menaquinone. Couples the redox reaction to proton translocation (for every two electrons transferred, four hydrogen ions are translocated across the cytoplasmic membrane), and thus conserves the redox energy in a proton gradient.</text>
</comment>
<comment type="catalytic activity">
    <reaction evidence="1">
        <text>a quinone + NADH + 5 H(+)(in) = a quinol + NAD(+) + 4 H(+)(out)</text>
        <dbReference type="Rhea" id="RHEA:57888"/>
        <dbReference type="ChEBI" id="CHEBI:15378"/>
        <dbReference type="ChEBI" id="CHEBI:24646"/>
        <dbReference type="ChEBI" id="CHEBI:57540"/>
        <dbReference type="ChEBI" id="CHEBI:57945"/>
        <dbReference type="ChEBI" id="CHEBI:132124"/>
    </reaction>
</comment>
<comment type="subunit">
    <text evidence="1">NDH-1 is composed of 14 different subunits. Subunits NuoB, C, D, E, F, and G constitute the peripheral sector of the complex.</text>
</comment>
<comment type="subcellular location">
    <subcellularLocation>
        <location evidence="1">Cell membrane</location>
        <topology evidence="1">Peripheral membrane protein</topology>
        <orientation evidence="1">Cytoplasmic side</orientation>
    </subcellularLocation>
</comment>
<comment type="similarity">
    <text evidence="1">Belongs to the complex I 49 kDa subunit family.</text>
</comment>
<proteinExistence type="inferred from homology"/>
<name>NUOD_MYCA1</name>
<organism>
    <name type="scientific">Mycobacterium avium (strain 104)</name>
    <dbReference type="NCBI Taxonomy" id="243243"/>
    <lineage>
        <taxon>Bacteria</taxon>
        <taxon>Bacillati</taxon>
        <taxon>Actinomycetota</taxon>
        <taxon>Actinomycetes</taxon>
        <taxon>Mycobacteriales</taxon>
        <taxon>Mycobacteriaceae</taxon>
        <taxon>Mycobacterium</taxon>
        <taxon>Mycobacterium avium complex (MAC)</taxon>
    </lineage>
</organism>
<gene>
    <name evidence="1" type="primary">nuoD</name>
    <name type="ordered locus">MAV_4036</name>
</gene>
<reference key="1">
    <citation type="submission" date="2006-10" db="EMBL/GenBank/DDBJ databases">
        <authorList>
            <person name="Fleischmann R.D."/>
            <person name="Dodson R.J."/>
            <person name="Haft D.H."/>
            <person name="Merkel J.S."/>
            <person name="Nelson W.C."/>
            <person name="Fraser C.M."/>
        </authorList>
    </citation>
    <scope>NUCLEOTIDE SEQUENCE [LARGE SCALE GENOMIC DNA]</scope>
    <source>
        <strain>104</strain>
    </source>
</reference>
<feature type="chain" id="PRO_0000357853" description="NADH-quinone oxidoreductase subunit D">
    <location>
        <begin position="1"/>
        <end position="441"/>
    </location>
</feature>
<keyword id="KW-1003">Cell membrane</keyword>
<keyword id="KW-0472">Membrane</keyword>
<keyword id="KW-0520">NAD</keyword>
<keyword id="KW-0874">Quinone</keyword>
<keyword id="KW-1278">Translocase</keyword>
<keyword id="KW-0813">Transport</keyword>
<accession>A0QJV0</accession>
<dbReference type="EC" id="7.1.1.-" evidence="1"/>
<dbReference type="EMBL" id="CP000479">
    <property type="protein sequence ID" value="ABK68892.1"/>
    <property type="molecule type" value="Genomic_DNA"/>
</dbReference>
<dbReference type="RefSeq" id="WP_003874819.1">
    <property type="nucleotide sequence ID" value="NC_008595.1"/>
</dbReference>
<dbReference type="SMR" id="A0QJV0"/>
<dbReference type="GeneID" id="75271518"/>
<dbReference type="KEGG" id="mav:MAV_4036"/>
<dbReference type="HOGENOM" id="CLU_015134_1_2_11"/>
<dbReference type="Proteomes" id="UP000001574">
    <property type="component" value="Chromosome"/>
</dbReference>
<dbReference type="GO" id="GO:0005886">
    <property type="term" value="C:plasma membrane"/>
    <property type="evidence" value="ECO:0007669"/>
    <property type="project" value="UniProtKB-SubCell"/>
</dbReference>
<dbReference type="GO" id="GO:0051287">
    <property type="term" value="F:NAD binding"/>
    <property type="evidence" value="ECO:0007669"/>
    <property type="project" value="InterPro"/>
</dbReference>
<dbReference type="GO" id="GO:0050136">
    <property type="term" value="F:NADH:ubiquinone reductase (non-electrogenic) activity"/>
    <property type="evidence" value="ECO:0007669"/>
    <property type="project" value="UniProtKB-UniRule"/>
</dbReference>
<dbReference type="GO" id="GO:0048038">
    <property type="term" value="F:quinone binding"/>
    <property type="evidence" value="ECO:0007669"/>
    <property type="project" value="UniProtKB-KW"/>
</dbReference>
<dbReference type="FunFam" id="1.10.645.10:FF:000005">
    <property type="entry name" value="NADH-quinone oxidoreductase subunit D"/>
    <property type="match status" value="1"/>
</dbReference>
<dbReference type="Gene3D" id="1.10.645.10">
    <property type="entry name" value="Cytochrome-c3 Hydrogenase, chain B"/>
    <property type="match status" value="1"/>
</dbReference>
<dbReference type="HAMAP" id="MF_01358">
    <property type="entry name" value="NDH1_NuoD"/>
    <property type="match status" value="1"/>
</dbReference>
<dbReference type="InterPro" id="IPR001135">
    <property type="entry name" value="NADH_Q_OxRdtase_suD"/>
</dbReference>
<dbReference type="InterPro" id="IPR014029">
    <property type="entry name" value="NADH_UbQ_OxRdtase_49kDa_CS"/>
</dbReference>
<dbReference type="InterPro" id="IPR022885">
    <property type="entry name" value="NDH1_su_D/H"/>
</dbReference>
<dbReference type="InterPro" id="IPR029014">
    <property type="entry name" value="NiFe-Hase_large"/>
</dbReference>
<dbReference type="NCBIfam" id="TIGR01962">
    <property type="entry name" value="NuoD"/>
    <property type="match status" value="1"/>
</dbReference>
<dbReference type="NCBIfam" id="NF004739">
    <property type="entry name" value="PRK06075.1"/>
    <property type="match status" value="1"/>
</dbReference>
<dbReference type="PANTHER" id="PTHR11993:SF10">
    <property type="entry name" value="NADH DEHYDROGENASE [UBIQUINONE] IRON-SULFUR PROTEIN 2, MITOCHONDRIAL"/>
    <property type="match status" value="1"/>
</dbReference>
<dbReference type="PANTHER" id="PTHR11993">
    <property type="entry name" value="NADH-UBIQUINONE OXIDOREDUCTASE 49 KDA SUBUNIT"/>
    <property type="match status" value="1"/>
</dbReference>
<dbReference type="Pfam" id="PF00346">
    <property type="entry name" value="Complex1_49kDa"/>
    <property type="match status" value="1"/>
</dbReference>
<dbReference type="SUPFAM" id="SSF56762">
    <property type="entry name" value="HydB/Nqo4-like"/>
    <property type="match status" value="1"/>
</dbReference>
<dbReference type="PROSITE" id="PS00535">
    <property type="entry name" value="COMPLEX1_49K"/>
    <property type="match status" value="1"/>
</dbReference>